<feature type="chain" id="PRO_0000295371" description="PAN2-PAN3 deadenylation complex subunit PAN3">
    <location>
        <begin position="1"/>
        <end position="680"/>
    </location>
</feature>
<feature type="zinc finger region" description="C3H1-type" evidence="1">
    <location>
        <begin position="25"/>
        <end position="54"/>
    </location>
</feature>
<feature type="region of interest" description="Disordered" evidence="2">
    <location>
        <begin position="1"/>
        <end position="26"/>
    </location>
</feature>
<feature type="region of interest" description="Disordered" evidence="2">
    <location>
        <begin position="51"/>
        <end position="87"/>
    </location>
</feature>
<feature type="region of interest" description="Disordered" evidence="2">
    <location>
        <begin position="99"/>
        <end position="120"/>
    </location>
</feature>
<feature type="region of interest" description="Pseudokinase domain" evidence="1">
    <location>
        <begin position="256"/>
        <end position="522"/>
    </location>
</feature>
<feature type="region of interest" description="Knob domain" evidence="1">
    <location>
        <begin position="562"/>
        <end position="680"/>
    </location>
</feature>
<feature type="region of interest" description="Disordered" evidence="2">
    <location>
        <begin position="655"/>
        <end position="680"/>
    </location>
</feature>
<feature type="coiled-coil region" evidence="1">
    <location>
        <begin position="523"/>
        <end position="561"/>
    </location>
</feature>
<feature type="short sequence motif" description="PABPC-interacting motif-2 (PAM-2)" evidence="3">
    <location>
        <begin position="62"/>
        <end position="82"/>
    </location>
</feature>
<feature type="compositionally biased region" description="Basic and acidic residues" evidence="2">
    <location>
        <begin position="52"/>
        <end position="64"/>
    </location>
</feature>
<feature type="compositionally biased region" description="Low complexity" evidence="2">
    <location>
        <begin position="99"/>
        <end position="117"/>
    </location>
</feature>
<feature type="compositionally biased region" description="Gly residues" evidence="2">
    <location>
        <begin position="655"/>
        <end position="669"/>
    </location>
</feature>
<feature type="compositionally biased region" description="Basic residues" evidence="2">
    <location>
        <begin position="670"/>
        <end position="680"/>
    </location>
</feature>
<feature type="binding site" evidence="1">
    <location>
        <position position="311"/>
    </location>
    <ligand>
        <name>ATP</name>
        <dbReference type="ChEBI" id="CHEBI:30616"/>
    </ligand>
</feature>
<feature type="binding site" evidence="1">
    <location>
        <begin position="360"/>
        <end position="367"/>
    </location>
    <ligand>
        <name>ATP</name>
        <dbReference type="ChEBI" id="CHEBI:30616"/>
    </ligand>
</feature>
<feature type="binding site" evidence="1">
    <location>
        <begin position="422"/>
        <end position="423"/>
    </location>
    <ligand>
        <name>ATP</name>
        <dbReference type="ChEBI" id="CHEBI:30616"/>
    </ligand>
</feature>
<proteinExistence type="inferred from homology"/>
<reference key="1">
    <citation type="journal article" date="2005" name="Nature">
        <title>The genome sequence of the rice blast fungus Magnaporthe grisea.</title>
        <authorList>
            <person name="Dean R.A."/>
            <person name="Talbot N.J."/>
            <person name="Ebbole D.J."/>
            <person name="Farman M.L."/>
            <person name="Mitchell T.K."/>
            <person name="Orbach M.J."/>
            <person name="Thon M.R."/>
            <person name="Kulkarni R."/>
            <person name="Xu J.-R."/>
            <person name="Pan H."/>
            <person name="Read N.D."/>
            <person name="Lee Y.-H."/>
            <person name="Carbone I."/>
            <person name="Brown D."/>
            <person name="Oh Y.Y."/>
            <person name="Donofrio N."/>
            <person name="Jeong J.S."/>
            <person name="Soanes D.M."/>
            <person name="Djonovic S."/>
            <person name="Kolomiets E."/>
            <person name="Rehmeyer C."/>
            <person name="Li W."/>
            <person name="Harding M."/>
            <person name="Kim S."/>
            <person name="Lebrun M.-H."/>
            <person name="Bohnert H."/>
            <person name="Coughlan S."/>
            <person name="Butler J."/>
            <person name="Calvo S.E."/>
            <person name="Ma L.-J."/>
            <person name="Nicol R."/>
            <person name="Purcell S."/>
            <person name="Nusbaum C."/>
            <person name="Galagan J.E."/>
            <person name="Birren B.W."/>
        </authorList>
    </citation>
    <scope>NUCLEOTIDE SEQUENCE [LARGE SCALE GENOMIC DNA]</scope>
    <source>
        <strain>70-15 / ATCC MYA-4617 / FGSC 8958</strain>
    </source>
</reference>
<protein>
    <recommendedName>
        <fullName evidence="1">PAN2-PAN3 deadenylation complex subunit PAN3</fullName>
    </recommendedName>
    <alternativeName>
        <fullName evidence="1">PAB1P-dependent poly(A)-specific ribonuclease</fullName>
    </alternativeName>
    <alternativeName>
        <fullName evidence="1">Poly(A)-nuclease deadenylation complex subunit 3</fullName>
        <shortName evidence="1">PAN deadenylation complex subunit 3</shortName>
    </alternativeName>
</protein>
<name>PAN3_PYRO7</name>
<evidence type="ECO:0000255" key="1">
    <source>
        <dbReference type="HAMAP-Rule" id="MF_03181"/>
    </source>
</evidence>
<evidence type="ECO:0000256" key="2">
    <source>
        <dbReference type="SAM" id="MobiDB-lite"/>
    </source>
</evidence>
<evidence type="ECO:0000305" key="3"/>
<keyword id="KW-0067">ATP-binding</keyword>
<keyword id="KW-0175">Coiled coil</keyword>
<keyword id="KW-0963">Cytoplasm</keyword>
<keyword id="KW-0479">Metal-binding</keyword>
<keyword id="KW-0507">mRNA processing</keyword>
<keyword id="KW-0547">Nucleotide-binding</keyword>
<keyword id="KW-1185">Reference proteome</keyword>
<keyword id="KW-0862">Zinc</keyword>
<keyword id="KW-0863">Zinc-finger</keyword>
<dbReference type="EMBL" id="CM000230">
    <property type="protein sequence ID" value="EAQ71303.1"/>
    <property type="molecule type" value="Genomic_DNA"/>
</dbReference>
<dbReference type="EMBL" id="CM001237">
    <property type="protein sequence ID" value="EHA46026.1"/>
    <property type="molecule type" value="Genomic_DNA"/>
</dbReference>
<dbReference type="RefSeq" id="XP_003720769.1">
    <property type="nucleotide sequence ID" value="XM_003720721.1"/>
</dbReference>
<dbReference type="SMR" id="Q2KFH6"/>
<dbReference type="FunCoup" id="Q2KFH6">
    <property type="interactions" value="636"/>
</dbReference>
<dbReference type="STRING" id="242507.Q2KFH6"/>
<dbReference type="EnsemblFungi" id="MGG_02939T0">
    <property type="protein sequence ID" value="MGG_02939T0"/>
    <property type="gene ID" value="MGG_02939"/>
</dbReference>
<dbReference type="GeneID" id="2682492"/>
<dbReference type="KEGG" id="mgr:MGG_02939"/>
<dbReference type="VEuPathDB" id="FungiDB:MGG_02939"/>
<dbReference type="eggNOG" id="KOG3741">
    <property type="taxonomic scope" value="Eukaryota"/>
</dbReference>
<dbReference type="HOGENOM" id="CLU_016423_1_0_1"/>
<dbReference type="InParanoid" id="Q2KFH6"/>
<dbReference type="OMA" id="YVFHSVD"/>
<dbReference type="OrthoDB" id="204958at2759"/>
<dbReference type="Proteomes" id="UP000009058">
    <property type="component" value="Chromosome 7"/>
</dbReference>
<dbReference type="GO" id="GO:0000932">
    <property type="term" value="C:P-body"/>
    <property type="evidence" value="ECO:0007669"/>
    <property type="project" value="TreeGrafter"/>
</dbReference>
<dbReference type="GO" id="GO:0031251">
    <property type="term" value="C:PAN complex"/>
    <property type="evidence" value="ECO:0007669"/>
    <property type="project" value="UniProtKB-UniRule"/>
</dbReference>
<dbReference type="GO" id="GO:0005524">
    <property type="term" value="F:ATP binding"/>
    <property type="evidence" value="ECO:0007669"/>
    <property type="project" value="UniProtKB-UniRule"/>
</dbReference>
<dbReference type="GO" id="GO:0008143">
    <property type="term" value="F:poly(A) binding"/>
    <property type="evidence" value="ECO:0007669"/>
    <property type="project" value="TreeGrafter"/>
</dbReference>
<dbReference type="GO" id="GO:0004672">
    <property type="term" value="F:protein kinase activity"/>
    <property type="evidence" value="ECO:0007669"/>
    <property type="project" value="InterPro"/>
</dbReference>
<dbReference type="GO" id="GO:0008270">
    <property type="term" value="F:zinc ion binding"/>
    <property type="evidence" value="ECO:0007669"/>
    <property type="project" value="UniProtKB-KW"/>
</dbReference>
<dbReference type="GO" id="GO:0006397">
    <property type="term" value="P:mRNA processing"/>
    <property type="evidence" value="ECO:0007669"/>
    <property type="project" value="UniProtKB-KW"/>
</dbReference>
<dbReference type="GO" id="GO:0000289">
    <property type="term" value="P:nuclear-transcribed mRNA poly(A) tail shortening"/>
    <property type="evidence" value="ECO:0007669"/>
    <property type="project" value="UniProtKB-UniRule"/>
</dbReference>
<dbReference type="FunFam" id="1.10.287.3700:FF:000001">
    <property type="entry name" value="PAN2-PAN3 deadenylation complex subunit PAN3"/>
    <property type="match status" value="1"/>
</dbReference>
<dbReference type="Gene3D" id="1.10.287.3700">
    <property type="match status" value="1"/>
</dbReference>
<dbReference type="Gene3D" id="1.20.5.5160">
    <property type="match status" value="1"/>
</dbReference>
<dbReference type="Gene3D" id="6.10.250.3160">
    <property type="match status" value="1"/>
</dbReference>
<dbReference type="Gene3D" id="1.10.510.10">
    <property type="entry name" value="Transferase(Phosphotransferase) domain 1"/>
    <property type="match status" value="1"/>
</dbReference>
<dbReference type="HAMAP" id="MF_03181">
    <property type="entry name" value="PAN3"/>
    <property type="match status" value="1"/>
</dbReference>
<dbReference type="InterPro" id="IPR011009">
    <property type="entry name" value="Kinase-like_dom_sf"/>
</dbReference>
<dbReference type="InterPro" id="IPR030844">
    <property type="entry name" value="PAN3"/>
</dbReference>
<dbReference type="InterPro" id="IPR041332">
    <property type="entry name" value="Pan3_PK"/>
</dbReference>
<dbReference type="InterPro" id="IPR000719">
    <property type="entry name" value="Prot_kinase_dom"/>
</dbReference>
<dbReference type="InterPro" id="IPR000571">
    <property type="entry name" value="Znf_CCCH"/>
</dbReference>
<dbReference type="PANTHER" id="PTHR12272">
    <property type="entry name" value="DEADENYLATION COMPLEX SUBUNIT PAN3"/>
    <property type="match status" value="1"/>
</dbReference>
<dbReference type="PANTHER" id="PTHR12272:SF11">
    <property type="entry name" value="PAN2-PAN3 DEADENYLATION COMPLEX SUBUNIT PAN3"/>
    <property type="match status" value="1"/>
</dbReference>
<dbReference type="Pfam" id="PF18101">
    <property type="entry name" value="Pan3_PK"/>
    <property type="match status" value="1"/>
</dbReference>
<dbReference type="SUPFAM" id="SSF56112">
    <property type="entry name" value="Protein kinase-like (PK-like)"/>
    <property type="match status" value="1"/>
</dbReference>
<dbReference type="PROSITE" id="PS50011">
    <property type="entry name" value="PROTEIN_KINASE_DOM"/>
    <property type="match status" value="1"/>
</dbReference>
<dbReference type="PROSITE" id="PS50103">
    <property type="entry name" value="ZF_C3H1"/>
    <property type="match status" value="1"/>
</dbReference>
<sequence>MATTRYNSNDFRRQLGSPRPKGRADTKDTLCRNILIYGHCRYEDAGCAFNHDQTKKSPKPDATTRKTLNVDSAPFTPAVSSQPSKKTFSSSHAASAAVFTPRATAATPTGTPTAQETDIPPAANTPSAFSNIAAIREFTPQQQNYDLTTNGAAAATQDASLNYDPFTMSSVASALPAAQYNPYASTDHTGLVAHGGAYFPSAQAGYQSLIPPSFHLYAPIGPYREDLQPWQRSTYDFFMPENLRLELQNKSHAALQTMTGTAALQMPQVGNYHTLVTLDKTSNRKSSSLFGYVTWVYKAVSGKTSRLYSLRRLEGFTVSNDQILRPVKEWKKITNGNIVAMQDAFTTRAWGDSSLMFSFEYYPLAETLMEHHFPNAQHKTSFRSNTNHQASETVLWSYIVQISNALNSIHSNGLAARCIDATKIIITGKNHIRLSSCGILDVINYEKSKPMTELQEEDFVAFGKLIVSLATNTPPTGLNLGKAIEQMGRNHSSTLKDMVLWLLNPPQASGQKTVKNLVAGINEHVMTAFDAQQRQSDMLYSELYREVENGRVLRLLMKLATINERTEYDKDAGWSENGDRYMLKLFRDYVFHQVDAQGRPVLDPGHMLRCLSKLDVGTEERIKLTSRDCETDFLVTYKDLKGAVQSAFGELLKGSGNGRGGPVASGSGHGVHHPSHRDRF</sequence>
<accession>Q2KFH6</accession>
<accession>A4RBC4</accession>
<accession>G4NLE2</accession>
<organism>
    <name type="scientific">Pyricularia oryzae (strain 70-15 / ATCC MYA-4617 / FGSC 8958)</name>
    <name type="common">Rice blast fungus</name>
    <name type="synonym">Magnaporthe oryzae</name>
    <dbReference type="NCBI Taxonomy" id="242507"/>
    <lineage>
        <taxon>Eukaryota</taxon>
        <taxon>Fungi</taxon>
        <taxon>Dikarya</taxon>
        <taxon>Ascomycota</taxon>
        <taxon>Pezizomycotina</taxon>
        <taxon>Sordariomycetes</taxon>
        <taxon>Sordariomycetidae</taxon>
        <taxon>Magnaporthales</taxon>
        <taxon>Pyriculariaceae</taxon>
        <taxon>Pyricularia</taxon>
    </lineage>
</organism>
<gene>
    <name evidence="1" type="primary">PAN3</name>
    <name type="ORF">MGCH7_ch7g710</name>
    <name type="ORF">MGG_02939</name>
</gene>
<comment type="function">
    <text evidence="1">Regulatory subunit of the poly(A)-nuclease (PAN) deadenylation complex, one of two cytoplasmic mRNA deadenylases involved in mRNA turnover. PAN specifically shortens poly(A) tails of RNA and the activity is stimulated by poly(A)-binding protein PAB1. PAN deadenylation is followed by rapid degradation of the shortened mRNA tails by the CCR4-NOT complex. Deadenylated mRNAs are then degraded by two alternative mechanisms, namely exosome-mediated 3'-5' exonucleolytic degradation, or deadenylation-dependent mRNA decaping and subsequent 5'-3' exonucleolytic degradation by XRN1. May also be involved in post-transcriptional maturation of mRNA poly(A) tails. PAN3 acts as a positive regulator for PAN activity, recruiting the catalytic subunit PAN2 to mRNA via its interaction with RNA and with PAB1.</text>
</comment>
<comment type="subunit">
    <text evidence="1">Homodimer. Forms a heterotrimer with a catalytic subunit PAN2 to form the poly(A)-nuclease (PAN) deadenylation complex. Interacts (via PAM-2 motif) with poly(A)-binding protein PAB1 (via PABC domain), conferring substrate specificity of the enzyme complex.</text>
</comment>
<comment type="subcellular location">
    <subcellularLocation>
        <location evidence="1">Cytoplasm</location>
    </subcellularLocation>
</comment>
<comment type="domain">
    <text evidence="1">The N-terminal zinc finger binds to poly(A) RNA.</text>
</comment>
<comment type="domain">
    <text evidence="1">Contains a pseudokinase domain. The protein kinase domain is predicted to be catalytically inactive because some of the residues important for catalytic activity are substituted and it lacks the equivalent of the binding site for a peptide substrate. However, it has retained an ATP-binding site and ATP-binding is required for mRNA degradation, stimulating the activity of the PAN2 nuclease in vitro. The nucleotide-binding site is juxtaposed to the RNase active site of PAN2 in the complex and may actually bind nucleosides of a poly(A) RNA rather than ATP, feeding the poly(A)-tail to the active site of the deadenylase and thus increasing the efficiency with which this distributive enzyme degrades oligo(A) RNAs.</text>
</comment>
<comment type="domain">
    <text evidence="1">The pseudokinase domain, the coiled-coil (CC), and C-terminal knob domain (CK) form a structural unit (PKC) that forms an extensive high-affinity interaction surface for PAN2.</text>
</comment>
<comment type="similarity">
    <text evidence="1">Belongs to the protein kinase superfamily. PAN3 family.</text>
</comment>